<name>DNAK_CLAM3</name>
<gene>
    <name evidence="1" type="primary">dnaK</name>
    <name type="ordered locus">CMM_0151</name>
</gene>
<proteinExistence type="inferred from homology"/>
<protein>
    <recommendedName>
        <fullName evidence="1">Chaperone protein DnaK</fullName>
    </recommendedName>
    <alternativeName>
        <fullName evidence="1">HSP70</fullName>
    </alternativeName>
    <alternativeName>
        <fullName evidence="1">Heat shock 70 kDa protein</fullName>
    </alternativeName>
    <alternativeName>
        <fullName evidence="1">Heat shock protein 70</fullName>
    </alternativeName>
</protein>
<keyword id="KW-0067">ATP-binding</keyword>
<keyword id="KW-0143">Chaperone</keyword>
<keyword id="KW-0547">Nucleotide-binding</keyword>
<keyword id="KW-0597">Phosphoprotein</keyword>
<keyword id="KW-0346">Stress response</keyword>
<organism>
    <name type="scientific">Clavibacter michiganensis subsp. michiganensis (strain NCPPB 382)</name>
    <dbReference type="NCBI Taxonomy" id="443906"/>
    <lineage>
        <taxon>Bacteria</taxon>
        <taxon>Bacillati</taxon>
        <taxon>Actinomycetota</taxon>
        <taxon>Actinomycetes</taxon>
        <taxon>Micrococcales</taxon>
        <taxon>Microbacteriaceae</taxon>
        <taxon>Clavibacter</taxon>
    </lineage>
</organism>
<feature type="chain" id="PRO_1000059538" description="Chaperone protein DnaK">
    <location>
        <begin position="1"/>
        <end position="623"/>
    </location>
</feature>
<feature type="region of interest" description="Disordered" evidence="2">
    <location>
        <begin position="580"/>
        <end position="623"/>
    </location>
</feature>
<feature type="compositionally biased region" description="Low complexity" evidence="2">
    <location>
        <begin position="580"/>
        <end position="596"/>
    </location>
</feature>
<feature type="compositionally biased region" description="Acidic residues" evidence="2">
    <location>
        <begin position="604"/>
        <end position="617"/>
    </location>
</feature>
<feature type="modified residue" description="Phosphothreonine; by autocatalysis" evidence="1">
    <location>
        <position position="175"/>
    </location>
</feature>
<reference key="1">
    <citation type="journal article" date="2008" name="J. Bacteriol.">
        <title>The genome sequence of the tomato-pathogenic actinomycete Clavibacter michiganensis subsp. michiganensis NCPPB382 reveals a large island involved in pathogenicity.</title>
        <authorList>
            <person name="Gartemann K.-H."/>
            <person name="Abt B."/>
            <person name="Bekel T."/>
            <person name="Burger A."/>
            <person name="Engemann J."/>
            <person name="Fluegel M."/>
            <person name="Gaigalat L."/>
            <person name="Goesmann A."/>
            <person name="Graefen I."/>
            <person name="Kalinowski J."/>
            <person name="Kaup O."/>
            <person name="Kirchner O."/>
            <person name="Krause L."/>
            <person name="Linke B."/>
            <person name="McHardy A."/>
            <person name="Meyer F."/>
            <person name="Pohle S."/>
            <person name="Rueckert C."/>
            <person name="Schneiker S."/>
            <person name="Zellermann E.-M."/>
            <person name="Puehler A."/>
            <person name="Eichenlaub R."/>
            <person name="Kaiser O."/>
            <person name="Bartels D."/>
        </authorList>
    </citation>
    <scope>NUCLEOTIDE SEQUENCE [LARGE SCALE GENOMIC DNA]</scope>
    <source>
        <strain>NCPPB 382</strain>
    </source>
</reference>
<comment type="function">
    <text evidence="1">Acts as a chaperone.</text>
</comment>
<comment type="induction">
    <text evidence="1">By stress conditions e.g. heat shock.</text>
</comment>
<comment type="similarity">
    <text evidence="1">Belongs to the heat shock protein 70 family.</text>
</comment>
<evidence type="ECO:0000255" key="1">
    <source>
        <dbReference type="HAMAP-Rule" id="MF_00332"/>
    </source>
</evidence>
<evidence type="ECO:0000256" key="2">
    <source>
        <dbReference type="SAM" id="MobiDB-lite"/>
    </source>
</evidence>
<sequence>MARAVGIDLGTTNSVVSVLEGGEPTVIANAEGARTTPSVVAFTKDGEVLVGETAKRQNVTNVDRTISSVKRHMGTDWTVGIDDKKYTSQELSARILGKLKRDAEQYLGDSVTDAVITVPAYFNDAERQATKEAGEIAGLNVLRIINEPTAAALAYGLDRGKEDELILVFDLGGGTFDVSLLEVGKDDDFSTIQVRSTAGDNRLGGDDWDQRIVDHLVKRFKESTGVDVSNDKIAKQRLKEAAEQAKKELSSSTSTSIQLPYLSLTENGPANLDETLTRAKFEELTNDLLERTRKPFEDVIREAGVSVGDVAHVVLVGGSTRMPAVVDLVKKLTGGKEPNKGVNPDEVVAVGAALQAGVLKGERKDVLLIDVTPLSLGIETKGGIMTKLIERNTAIPTKRSETFTTADDNQPSVAIQVFQGEREFTRDNKNLGTFELTGIAPAPRGIPQVEVTFDIDANGIVHVSAKDKGTGKEQSMTITGGSSLGKEDIERMVREAEEHAAEDKTRREQAEVRNNAEQLAYSIDKLIKENDDKLPEDVKSEVQGDVDGLKSALAGDDEDAVKTAFDKLSASQTKLGEAIYAQGQQEQAAGETPEGASEAKKDDEDIVDAEVVDEDDEDKKTDR</sequence>
<dbReference type="EMBL" id="AM711867">
    <property type="protein sequence ID" value="CAN00171.1"/>
    <property type="molecule type" value="Genomic_DNA"/>
</dbReference>
<dbReference type="RefSeq" id="WP_011931370.1">
    <property type="nucleotide sequence ID" value="NC_009480.1"/>
</dbReference>
<dbReference type="SMR" id="A5CM86"/>
<dbReference type="GeneID" id="92949173"/>
<dbReference type="KEGG" id="cmi:CMM_0151"/>
<dbReference type="eggNOG" id="COG0443">
    <property type="taxonomic scope" value="Bacteria"/>
</dbReference>
<dbReference type="HOGENOM" id="CLU_005965_2_4_11"/>
<dbReference type="OrthoDB" id="9766019at2"/>
<dbReference type="Proteomes" id="UP000001564">
    <property type="component" value="Chromosome"/>
</dbReference>
<dbReference type="GO" id="GO:0005524">
    <property type="term" value="F:ATP binding"/>
    <property type="evidence" value="ECO:0007669"/>
    <property type="project" value="UniProtKB-UniRule"/>
</dbReference>
<dbReference type="GO" id="GO:0140662">
    <property type="term" value="F:ATP-dependent protein folding chaperone"/>
    <property type="evidence" value="ECO:0007669"/>
    <property type="project" value="InterPro"/>
</dbReference>
<dbReference type="GO" id="GO:0051082">
    <property type="term" value="F:unfolded protein binding"/>
    <property type="evidence" value="ECO:0007669"/>
    <property type="project" value="InterPro"/>
</dbReference>
<dbReference type="CDD" id="cd10234">
    <property type="entry name" value="ASKHA_NBD_HSP70_DnaK-like"/>
    <property type="match status" value="1"/>
</dbReference>
<dbReference type="FunFam" id="2.60.34.10:FF:000014">
    <property type="entry name" value="Chaperone protein DnaK HSP70"/>
    <property type="match status" value="1"/>
</dbReference>
<dbReference type="FunFam" id="1.20.1270.10:FF:000001">
    <property type="entry name" value="Molecular chaperone DnaK"/>
    <property type="match status" value="1"/>
</dbReference>
<dbReference type="FunFam" id="3.30.420.40:FF:000071">
    <property type="entry name" value="Molecular chaperone DnaK"/>
    <property type="match status" value="1"/>
</dbReference>
<dbReference type="FunFam" id="3.90.640.10:FF:000003">
    <property type="entry name" value="Molecular chaperone DnaK"/>
    <property type="match status" value="1"/>
</dbReference>
<dbReference type="Gene3D" id="1.20.1270.10">
    <property type="match status" value="1"/>
</dbReference>
<dbReference type="Gene3D" id="3.30.420.40">
    <property type="match status" value="2"/>
</dbReference>
<dbReference type="Gene3D" id="3.90.640.10">
    <property type="entry name" value="Actin, Chain A, domain 4"/>
    <property type="match status" value="1"/>
</dbReference>
<dbReference type="Gene3D" id="2.60.34.10">
    <property type="entry name" value="Substrate Binding Domain Of DNAk, Chain A, domain 1"/>
    <property type="match status" value="1"/>
</dbReference>
<dbReference type="HAMAP" id="MF_00332">
    <property type="entry name" value="DnaK"/>
    <property type="match status" value="1"/>
</dbReference>
<dbReference type="InterPro" id="IPR043129">
    <property type="entry name" value="ATPase_NBD"/>
</dbReference>
<dbReference type="InterPro" id="IPR012725">
    <property type="entry name" value="Chaperone_DnaK"/>
</dbReference>
<dbReference type="InterPro" id="IPR018181">
    <property type="entry name" value="Heat_shock_70_CS"/>
</dbReference>
<dbReference type="InterPro" id="IPR029048">
    <property type="entry name" value="HSP70_C_sf"/>
</dbReference>
<dbReference type="InterPro" id="IPR029047">
    <property type="entry name" value="HSP70_peptide-bd_sf"/>
</dbReference>
<dbReference type="InterPro" id="IPR013126">
    <property type="entry name" value="Hsp_70_fam"/>
</dbReference>
<dbReference type="NCBIfam" id="NF001413">
    <property type="entry name" value="PRK00290.1"/>
    <property type="match status" value="1"/>
</dbReference>
<dbReference type="NCBIfam" id="TIGR02350">
    <property type="entry name" value="prok_dnaK"/>
    <property type="match status" value="1"/>
</dbReference>
<dbReference type="PANTHER" id="PTHR19375">
    <property type="entry name" value="HEAT SHOCK PROTEIN 70KDA"/>
    <property type="match status" value="1"/>
</dbReference>
<dbReference type="Pfam" id="PF00012">
    <property type="entry name" value="HSP70"/>
    <property type="match status" value="2"/>
</dbReference>
<dbReference type="PRINTS" id="PR00301">
    <property type="entry name" value="HEATSHOCK70"/>
</dbReference>
<dbReference type="SUPFAM" id="SSF53067">
    <property type="entry name" value="Actin-like ATPase domain"/>
    <property type="match status" value="2"/>
</dbReference>
<dbReference type="SUPFAM" id="SSF100934">
    <property type="entry name" value="Heat shock protein 70kD (HSP70), C-terminal subdomain"/>
    <property type="match status" value="1"/>
</dbReference>
<dbReference type="SUPFAM" id="SSF100920">
    <property type="entry name" value="Heat shock protein 70kD (HSP70), peptide-binding domain"/>
    <property type="match status" value="1"/>
</dbReference>
<dbReference type="PROSITE" id="PS00297">
    <property type="entry name" value="HSP70_1"/>
    <property type="match status" value="1"/>
</dbReference>
<dbReference type="PROSITE" id="PS00329">
    <property type="entry name" value="HSP70_2"/>
    <property type="match status" value="1"/>
</dbReference>
<dbReference type="PROSITE" id="PS01036">
    <property type="entry name" value="HSP70_3"/>
    <property type="match status" value="1"/>
</dbReference>
<accession>A5CM86</accession>